<evidence type="ECO:0000250" key="1">
    <source>
        <dbReference type="UniProtKB" id="Q9BW30"/>
    </source>
</evidence>
<evidence type="ECO:0000256" key="2">
    <source>
        <dbReference type="SAM" id="MobiDB-lite"/>
    </source>
</evidence>
<evidence type="ECO:0000269" key="3">
    <source>
    </source>
</evidence>
<evidence type="ECO:0000269" key="4">
    <source>
    </source>
</evidence>
<evidence type="ECO:0000269" key="5">
    <source>
    </source>
</evidence>
<evidence type="ECO:0000303" key="6">
    <source>
    </source>
</evidence>
<evidence type="ECO:0000305" key="7"/>
<evidence type="ECO:0000312" key="8">
    <source>
        <dbReference type="MGI" id="MGI:1915221"/>
    </source>
</evidence>
<evidence type="ECO:0007829" key="9">
    <source>
        <dbReference type="PDB" id="1WLM"/>
    </source>
</evidence>
<reference key="1">
    <citation type="journal article" date="2005" name="Science">
        <title>The transcriptional landscape of the mammalian genome.</title>
        <authorList>
            <person name="Carninci P."/>
            <person name="Kasukawa T."/>
            <person name="Katayama S."/>
            <person name="Gough J."/>
            <person name="Frith M.C."/>
            <person name="Maeda N."/>
            <person name="Oyama R."/>
            <person name="Ravasi T."/>
            <person name="Lenhard B."/>
            <person name="Wells C."/>
            <person name="Kodzius R."/>
            <person name="Shimokawa K."/>
            <person name="Bajic V.B."/>
            <person name="Brenner S.E."/>
            <person name="Batalov S."/>
            <person name="Forrest A.R."/>
            <person name="Zavolan M."/>
            <person name="Davis M.J."/>
            <person name="Wilming L.G."/>
            <person name="Aidinis V."/>
            <person name="Allen J.E."/>
            <person name="Ambesi-Impiombato A."/>
            <person name="Apweiler R."/>
            <person name="Aturaliya R.N."/>
            <person name="Bailey T.L."/>
            <person name="Bansal M."/>
            <person name="Baxter L."/>
            <person name="Beisel K.W."/>
            <person name="Bersano T."/>
            <person name="Bono H."/>
            <person name="Chalk A.M."/>
            <person name="Chiu K.P."/>
            <person name="Choudhary V."/>
            <person name="Christoffels A."/>
            <person name="Clutterbuck D.R."/>
            <person name="Crowe M.L."/>
            <person name="Dalla E."/>
            <person name="Dalrymple B.P."/>
            <person name="de Bono B."/>
            <person name="Della Gatta G."/>
            <person name="di Bernardo D."/>
            <person name="Down T."/>
            <person name="Engstrom P."/>
            <person name="Fagiolini M."/>
            <person name="Faulkner G."/>
            <person name="Fletcher C.F."/>
            <person name="Fukushima T."/>
            <person name="Furuno M."/>
            <person name="Futaki S."/>
            <person name="Gariboldi M."/>
            <person name="Georgii-Hemming P."/>
            <person name="Gingeras T.R."/>
            <person name="Gojobori T."/>
            <person name="Green R.E."/>
            <person name="Gustincich S."/>
            <person name="Harbers M."/>
            <person name="Hayashi Y."/>
            <person name="Hensch T.K."/>
            <person name="Hirokawa N."/>
            <person name="Hill D."/>
            <person name="Huminiecki L."/>
            <person name="Iacono M."/>
            <person name="Ikeo K."/>
            <person name="Iwama A."/>
            <person name="Ishikawa T."/>
            <person name="Jakt M."/>
            <person name="Kanapin A."/>
            <person name="Katoh M."/>
            <person name="Kawasawa Y."/>
            <person name="Kelso J."/>
            <person name="Kitamura H."/>
            <person name="Kitano H."/>
            <person name="Kollias G."/>
            <person name="Krishnan S.P."/>
            <person name="Kruger A."/>
            <person name="Kummerfeld S.K."/>
            <person name="Kurochkin I.V."/>
            <person name="Lareau L.F."/>
            <person name="Lazarevic D."/>
            <person name="Lipovich L."/>
            <person name="Liu J."/>
            <person name="Liuni S."/>
            <person name="McWilliam S."/>
            <person name="Madan Babu M."/>
            <person name="Madera M."/>
            <person name="Marchionni L."/>
            <person name="Matsuda H."/>
            <person name="Matsuzawa S."/>
            <person name="Miki H."/>
            <person name="Mignone F."/>
            <person name="Miyake S."/>
            <person name="Morris K."/>
            <person name="Mottagui-Tabar S."/>
            <person name="Mulder N."/>
            <person name="Nakano N."/>
            <person name="Nakauchi H."/>
            <person name="Ng P."/>
            <person name="Nilsson R."/>
            <person name="Nishiguchi S."/>
            <person name="Nishikawa S."/>
            <person name="Nori F."/>
            <person name="Ohara O."/>
            <person name="Okazaki Y."/>
            <person name="Orlando V."/>
            <person name="Pang K.C."/>
            <person name="Pavan W.J."/>
            <person name="Pavesi G."/>
            <person name="Pesole G."/>
            <person name="Petrovsky N."/>
            <person name="Piazza S."/>
            <person name="Reed J."/>
            <person name="Reid J.F."/>
            <person name="Ring B.Z."/>
            <person name="Ringwald M."/>
            <person name="Rost B."/>
            <person name="Ruan Y."/>
            <person name="Salzberg S.L."/>
            <person name="Sandelin A."/>
            <person name="Schneider C."/>
            <person name="Schoenbach C."/>
            <person name="Sekiguchi K."/>
            <person name="Semple C.A."/>
            <person name="Seno S."/>
            <person name="Sessa L."/>
            <person name="Sheng Y."/>
            <person name="Shibata Y."/>
            <person name="Shimada H."/>
            <person name="Shimada K."/>
            <person name="Silva D."/>
            <person name="Sinclair B."/>
            <person name="Sperling S."/>
            <person name="Stupka E."/>
            <person name="Sugiura K."/>
            <person name="Sultana R."/>
            <person name="Takenaka Y."/>
            <person name="Taki K."/>
            <person name="Tammoja K."/>
            <person name="Tan S.L."/>
            <person name="Tang S."/>
            <person name="Taylor M.S."/>
            <person name="Tegner J."/>
            <person name="Teichmann S.A."/>
            <person name="Ueda H.R."/>
            <person name="van Nimwegen E."/>
            <person name="Verardo R."/>
            <person name="Wei C.L."/>
            <person name="Yagi K."/>
            <person name="Yamanishi H."/>
            <person name="Zabarovsky E."/>
            <person name="Zhu S."/>
            <person name="Zimmer A."/>
            <person name="Hide W."/>
            <person name="Bult C."/>
            <person name="Grimmond S.M."/>
            <person name="Teasdale R.D."/>
            <person name="Liu E.T."/>
            <person name="Brusic V."/>
            <person name="Quackenbush J."/>
            <person name="Wahlestedt C."/>
            <person name="Mattick J.S."/>
            <person name="Hume D.A."/>
            <person name="Kai C."/>
            <person name="Sasaki D."/>
            <person name="Tomaru Y."/>
            <person name="Fukuda S."/>
            <person name="Kanamori-Katayama M."/>
            <person name="Suzuki M."/>
            <person name="Aoki J."/>
            <person name="Arakawa T."/>
            <person name="Iida J."/>
            <person name="Imamura K."/>
            <person name="Itoh M."/>
            <person name="Kato T."/>
            <person name="Kawaji H."/>
            <person name="Kawagashira N."/>
            <person name="Kawashima T."/>
            <person name="Kojima M."/>
            <person name="Kondo S."/>
            <person name="Konno H."/>
            <person name="Nakano K."/>
            <person name="Ninomiya N."/>
            <person name="Nishio T."/>
            <person name="Okada M."/>
            <person name="Plessy C."/>
            <person name="Shibata K."/>
            <person name="Shiraki T."/>
            <person name="Suzuki S."/>
            <person name="Tagami M."/>
            <person name="Waki K."/>
            <person name="Watahiki A."/>
            <person name="Okamura-Oho Y."/>
            <person name="Suzuki H."/>
            <person name="Kawai J."/>
            <person name="Hayashizaki Y."/>
        </authorList>
    </citation>
    <scope>NUCLEOTIDE SEQUENCE [LARGE SCALE MRNA]</scope>
    <source>
        <strain>C57BL/6J</strain>
        <strain>NOD</strain>
        <tissue>Embryo</tissue>
        <tissue>Tongue</tissue>
    </source>
</reference>
<reference key="2">
    <citation type="journal article" date="2004" name="Genome Res.">
        <title>The status, quality, and expansion of the NIH full-length cDNA project: the Mammalian Gene Collection (MGC).</title>
        <authorList>
            <consortium name="The MGC Project Team"/>
        </authorList>
    </citation>
    <scope>NUCLEOTIDE SEQUENCE [LARGE SCALE MRNA]</scope>
    <source>
        <tissue>Colon</tissue>
    </source>
</reference>
<reference key="3">
    <citation type="journal article" date="2009" name="Dev. Dyn.">
        <title>Tubulin polymerization-promoting protein family member 3, Tppp3, is a specific marker of the differentiating tendon sheath and synovial joints.</title>
        <authorList>
            <person name="Staverosky J.A."/>
            <person name="Pryce B.A."/>
            <person name="Watson S.S."/>
            <person name="Schweitzer R."/>
        </authorList>
    </citation>
    <scope>DEVELOPMENTAL STAGE</scope>
</reference>
<reference key="4">
    <citation type="journal article" date="2010" name="Cell">
        <title>A tissue-specific atlas of mouse protein phosphorylation and expression.</title>
        <authorList>
            <person name="Huttlin E.L."/>
            <person name="Jedrychowski M.P."/>
            <person name="Elias J.E."/>
            <person name="Goswami T."/>
            <person name="Rad R."/>
            <person name="Beausoleil S.A."/>
            <person name="Villen J."/>
            <person name="Haas W."/>
            <person name="Sowa M.E."/>
            <person name="Gygi S.P."/>
        </authorList>
    </citation>
    <scope>IDENTIFICATION BY MASS SPECTROMETRY [LARGE SCALE ANALYSIS]</scope>
    <source>
        <tissue>Brain</tissue>
        <tissue>Brown adipose tissue</tissue>
        <tissue>Heart</tissue>
        <tissue>Kidney</tissue>
        <tissue>Lung</tissue>
        <tissue>Pancreas</tissue>
        <tissue>Spleen</tissue>
        <tissue>Testis</tissue>
    </source>
</reference>
<reference key="5">
    <citation type="journal article" date="2018" name="Biol. Reprod.">
        <title>Uterine TPPP3 plays important role in embryo implantation via modulation of beta-catenin.</title>
        <authorList>
            <person name="Shukla V."/>
            <person name="Popli P."/>
            <person name="Kaushal J.B."/>
            <person name="Gupta K."/>
            <person name="Dwivedi A."/>
        </authorList>
    </citation>
    <scope>FUNCTION</scope>
    <scope>TISSUE SPECIFICITY</scope>
    <scope>INDUCTION</scope>
</reference>
<reference key="6">
    <citation type="journal article" date="2019" name="J. Endocrinol.">
        <title>Inhibition of TPPP3 attenuates beta-catenin/NF-kappaB/COX-2 signaling in endometrial stromal cells and impairs decidualization.</title>
        <authorList>
            <person name="Shukla V."/>
            <person name="Kaushal J.B."/>
            <person name="Sankhwar P."/>
            <person name="Manohar M."/>
            <person name="Dwivedi A."/>
        </authorList>
    </citation>
    <scope>FUNCTION</scope>
</reference>
<reference key="7">
    <citation type="submission" date="2005-07" db="PDB data bank">
        <title>Solution structure of mouse CGI-38 protein.</title>
        <authorList>
            <consortium name="RIKEN structural genomics initiative (RSGI)"/>
        </authorList>
    </citation>
    <scope>STRUCTURE BY NMR OF 1-138</scope>
</reference>
<name>TPPP3_MOUSE</name>
<keyword id="KW-0002">3D-structure</keyword>
<keyword id="KW-0007">Acetylation</keyword>
<keyword id="KW-0963">Cytoplasm</keyword>
<keyword id="KW-0206">Cytoskeleton</keyword>
<keyword id="KW-0493">Microtubule</keyword>
<keyword id="KW-1185">Reference proteome</keyword>
<dbReference type="EMBL" id="AK009771">
    <property type="protein sequence ID" value="BAB26493.1"/>
    <property type="molecule type" value="mRNA"/>
</dbReference>
<dbReference type="EMBL" id="AK012437">
    <property type="protein sequence ID" value="BAB28237.1"/>
    <property type="molecule type" value="mRNA"/>
</dbReference>
<dbReference type="EMBL" id="AK155018">
    <property type="protein sequence ID" value="BAE32991.1"/>
    <property type="molecule type" value="mRNA"/>
</dbReference>
<dbReference type="EMBL" id="AK160507">
    <property type="protein sequence ID" value="BAE35831.1"/>
    <property type="molecule type" value="mRNA"/>
</dbReference>
<dbReference type="EMBL" id="BC010788">
    <property type="protein sequence ID" value="AAH10788.1"/>
    <property type="molecule type" value="mRNA"/>
</dbReference>
<dbReference type="CCDS" id="CCDS22602.1"/>
<dbReference type="RefSeq" id="NP_080757.1">
    <property type="nucleotide sequence ID" value="NM_026481.3"/>
</dbReference>
<dbReference type="RefSeq" id="XP_006531387.1">
    <property type="nucleotide sequence ID" value="XM_006531324.3"/>
</dbReference>
<dbReference type="RefSeq" id="XP_036010147.1">
    <property type="nucleotide sequence ID" value="XM_036154254.1"/>
</dbReference>
<dbReference type="PDB" id="1WLM">
    <property type="method" value="NMR"/>
    <property type="chains" value="A=1-138"/>
</dbReference>
<dbReference type="PDBsum" id="1WLM"/>
<dbReference type="BMRB" id="Q9CRB6"/>
<dbReference type="SMR" id="Q9CRB6"/>
<dbReference type="FunCoup" id="Q9CRB6">
    <property type="interactions" value="98"/>
</dbReference>
<dbReference type="STRING" id="10090.ENSMUSP00000135040"/>
<dbReference type="GlyGen" id="Q9CRB6">
    <property type="glycosylation" value="2 sites, 1 O-linked glycan (2 sites)"/>
</dbReference>
<dbReference type="iPTMnet" id="Q9CRB6"/>
<dbReference type="PhosphoSitePlus" id="Q9CRB6"/>
<dbReference type="SwissPalm" id="Q9CRB6"/>
<dbReference type="jPOST" id="Q9CRB6"/>
<dbReference type="PaxDb" id="10090-ENSMUSP00000014990"/>
<dbReference type="PeptideAtlas" id="Q9CRB6"/>
<dbReference type="ProteomicsDB" id="259069"/>
<dbReference type="Antibodypedia" id="29534">
    <property type="antibodies" value="194 antibodies from 26 providers"/>
</dbReference>
<dbReference type="Ensembl" id="ENSMUST00000014990.13">
    <property type="protein sequence ID" value="ENSMUSP00000014990.7"/>
    <property type="gene ID" value="ENSMUSG00000014846.13"/>
</dbReference>
<dbReference type="Ensembl" id="ENSMUST00000176419.2">
    <property type="protein sequence ID" value="ENSMUSP00000134807.2"/>
    <property type="gene ID" value="ENSMUSG00000014846.13"/>
</dbReference>
<dbReference type="Ensembl" id="ENSMUST00000177126.8">
    <property type="protein sequence ID" value="ENSMUSP00000135040.2"/>
    <property type="gene ID" value="ENSMUSG00000014846.13"/>
</dbReference>
<dbReference type="GeneID" id="67971"/>
<dbReference type="KEGG" id="mmu:67971"/>
<dbReference type="UCSC" id="uc009ndc.2">
    <property type="organism name" value="mouse"/>
</dbReference>
<dbReference type="AGR" id="MGI:1915221"/>
<dbReference type="CTD" id="51673"/>
<dbReference type="MGI" id="MGI:1915221">
    <property type="gene designation" value="Tppp3"/>
</dbReference>
<dbReference type="VEuPathDB" id="HostDB:ENSMUSG00000014846"/>
<dbReference type="eggNOG" id="KOG4070">
    <property type="taxonomic scope" value="Eukaryota"/>
</dbReference>
<dbReference type="GeneTree" id="ENSGT00940000153875"/>
<dbReference type="HOGENOM" id="CLU_091734_0_0_1"/>
<dbReference type="InParanoid" id="Q9CRB6"/>
<dbReference type="OMA" id="EAFNSIC"/>
<dbReference type="OrthoDB" id="548799at2759"/>
<dbReference type="PhylomeDB" id="Q9CRB6"/>
<dbReference type="TreeFam" id="TF314440"/>
<dbReference type="BioGRID-ORCS" id="67971">
    <property type="hits" value="1 hit in 77 CRISPR screens"/>
</dbReference>
<dbReference type="EvolutionaryTrace" id="Q9CRB6"/>
<dbReference type="PRO" id="PR:Q9CRB6"/>
<dbReference type="Proteomes" id="UP000000589">
    <property type="component" value="Chromosome 8"/>
</dbReference>
<dbReference type="RNAct" id="Q9CRB6">
    <property type="molecule type" value="protein"/>
</dbReference>
<dbReference type="Bgee" id="ENSMUSG00000014846">
    <property type="expression patterns" value="Expressed in facial nucleus and 251 other cell types or tissues"/>
</dbReference>
<dbReference type="GO" id="GO:0005874">
    <property type="term" value="C:microtubule"/>
    <property type="evidence" value="ECO:0007669"/>
    <property type="project" value="UniProtKB-KW"/>
</dbReference>
<dbReference type="GO" id="GO:0097427">
    <property type="term" value="C:microtubule bundle"/>
    <property type="evidence" value="ECO:0007669"/>
    <property type="project" value="Ensembl"/>
</dbReference>
<dbReference type="GO" id="GO:0048471">
    <property type="term" value="C:perinuclear region of cytoplasm"/>
    <property type="evidence" value="ECO:0007669"/>
    <property type="project" value="Ensembl"/>
</dbReference>
<dbReference type="GO" id="GO:0015631">
    <property type="term" value="F:tubulin binding"/>
    <property type="evidence" value="ECO:0000250"/>
    <property type="project" value="UniProtKB"/>
</dbReference>
<dbReference type="GO" id="GO:0046697">
    <property type="term" value="P:decidualization"/>
    <property type="evidence" value="ECO:0000250"/>
    <property type="project" value="UniProtKB"/>
</dbReference>
<dbReference type="GO" id="GO:0007566">
    <property type="term" value="P:embryo implantation"/>
    <property type="evidence" value="ECO:0000315"/>
    <property type="project" value="UniProtKB"/>
</dbReference>
<dbReference type="GO" id="GO:0001578">
    <property type="term" value="P:microtubule bundle formation"/>
    <property type="evidence" value="ECO:0000250"/>
    <property type="project" value="UniProtKB"/>
</dbReference>
<dbReference type="GO" id="GO:0046785">
    <property type="term" value="P:microtubule polymerization"/>
    <property type="evidence" value="ECO:0007669"/>
    <property type="project" value="InterPro"/>
</dbReference>
<dbReference type="FunFam" id="1.10.238.10:FF:000057">
    <property type="entry name" value="Tubulin polymerization-promoting protein family member 3"/>
    <property type="match status" value="1"/>
</dbReference>
<dbReference type="Gene3D" id="1.10.238.10">
    <property type="entry name" value="EF-hand"/>
    <property type="match status" value="1"/>
</dbReference>
<dbReference type="InterPro" id="IPR011992">
    <property type="entry name" value="EF-hand-dom_pair"/>
</dbReference>
<dbReference type="InterPro" id="IPR008907">
    <property type="entry name" value="TPP/p25"/>
</dbReference>
<dbReference type="PANTHER" id="PTHR12932">
    <property type="entry name" value="P25 ALPHA-RELATED"/>
    <property type="match status" value="1"/>
</dbReference>
<dbReference type="PANTHER" id="PTHR12932:SF16">
    <property type="entry name" value="TUBULIN POLYMERIZATION-PROMOTING PROTEIN FAMILY MEMBER 3"/>
    <property type="match status" value="1"/>
</dbReference>
<dbReference type="Pfam" id="PF05517">
    <property type="entry name" value="p25-alpha"/>
    <property type="match status" value="1"/>
</dbReference>
<dbReference type="SUPFAM" id="SSF47473">
    <property type="entry name" value="EF-hand"/>
    <property type="match status" value="1"/>
</dbReference>
<proteinExistence type="evidence at protein level"/>
<protein>
    <recommendedName>
        <fullName evidence="6">Tubulin polymerization-promoting protein family member 3</fullName>
    </recommendedName>
</protein>
<accession>Q9CRB6</accession>
<accession>Q3TUZ0</accession>
<organism>
    <name type="scientific">Mus musculus</name>
    <name type="common">Mouse</name>
    <dbReference type="NCBI Taxonomy" id="10090"/>
    <lineage>
        <taxon>Eukaryota</taxon>
        <taxon>Metazoa</taxon>
        <taxon>Chordata</taxon>
        <taxon>Craniata</taxon>
        <taxon>Vertebrata</taxon>
        <taxon>Euteleostomi</taxon>
        <taxon>Mammalia</taxon>
        <taxon>Eutheria</taxon>
        <taxon>Euarchontoglires</taxon>
        <taxon>Glires</taxon>
        <taxon>Rodentia</taxon>
        <taxon>Myomorpha</taxon>
        <taxon>Muroidea</taxon>
        <taxon>Muridae</taxon>
        <taxon>Murinae</taxon>
        <taxon>Mus</taxon>
        <taxon>Mus</taxon>
    </lineage>
</organism>
<feature type="initiator methionine" description="Removed" evidence="1">
    <location>
        <position position="1"/>
    </location>
</feature>
<feature type="chain" id="PRO_0000221139" description="Tubulin polymerization-promoting protein family member 3">
    <location>
        <begin position="2"/>
        <end position="176"/>
    </location>
</feature>
<feature type="region of interest" description="Disordered" evidence="2">
    <location>
        <begin position="132"/>
        <end position="152"/>
    </location>
</feature>
<feature type="compositionally biased region" description="Basic and acidic residues" evidence="2">
    <location>
        <begin position="134"/>
        <end position="144"/>
    </location>
</feature>
<feature type="modified residue" description="N-acetylalanine" evidence="1">
    <location>
        <position position="2"/>
    </location>
</feature>
<feature type="helix" evidence="9">
    <location>
        <begin position="10"/>
        <end position="18"/>
    </location>
</feature>
<feature type="strand" evidence="9">
    <location>
        <begin position="27"/>
        <end position="31"/>
    </location>
</feature>
<feature type="helix" evidence="9">
    <location>
        <begin position="32"/>
        <end position="41"/>
    </location>
</feature>
<feature type="strand" evidence="9">
    <location>
        <begin position="47"/>
        <end position="50"/>
    </location>
</feature>
<feature type="helix" evidence="9">
    <location>
        <begin position="52"/>
        <end position="62"/>
    </location>
</feature>
<feature type="strand" evidence="9">
    <location>
        <begin position="68"/>
        <end position="71"/>
    </location>
</feature>
<feature type="helix" evidence="9">
    <location>
        <begin position="72"/>
        <end position="81"/>
    </location>
</feature>
<feature type="helix" evidence="9">
    <location>
        <begin position="83"/>
        <end position="86"/>
    </location>
</feature>
<feature type="strand" evidence="9">
    <location>
        <begin position="87"/>
        <end position="89"/>
    </location>
</feature>
<feature type="helix" evidence="9">
    <location>
        <begin position="92"/>
        <end position="103"/>
    </location>
</feature>
<sequence>MAASTDIAGLEESFRKFAIHGDPKASGQEMNGKNWAKLCKDCKVADGKAVTGTDVDIVFSKVKAKSARVINYEEFKKALEELATKRFKGKSKEEAFDAICQLIAGKEPANIGVTKAKTGGAVDRLTDTSKYTGSHKERFDESGKGKGIAGRQDILDDSGYVSAYKNAGTYDAKVKK</sequence>
<gene>
    <name evidence="6 8" type="primary">Tppp3</name>
</gene>
<comment type="function">
    <text evidence="1 4 5">Regulator of microtubule dynamic that has microtubule bundling activity (By similarity). Required for embryo implantation; possibly by regulating beta-catenin (PubMed:29901777). Also required for decidualization via regulation of beta-catenin (PubMed:30667362).</text>
</comment>
<comment type="subcellular location">
    <subcellularLocation>
        <location evidence="1">Cytoplasm</location>
    </subcellularLocation>
    <subcellularLocation>
        <location evidence="1">Cytoplasm</location>
        <location evidence="1">Cytoskeleton</location>
    </subcellularLocation>
</comment>
<comment type="developmental stage">
    <text evidence="3 4">Expressed in the connective tissues of differentiating tendons and synovial joints (PubMed:19235716). Expressed in the uterus during window of implantation and early pregnancy (at protein level) (PubMed:29901777).</text>
</comment>
<comment type="induction">
    <text evidence="4">Up-regulated by estradiol.</text>
</comment>
<comment type="similarity">
    <text evidence="7">Belongs to the TPPP family.</text>
</comment>